<gene>
    <name type="primary">ENT2</name>
    <name type="ordered locus">YLR206W</name>
</gene>
<name>ENT2_YEAST</name>
<organism>
    <name type="scientific">Saccharomyces cerevisiae (strain ATCC 204508 / S288c)</name>
    <name type="common">Baker's yeast</name>
    <dbReference type="NCBI Taxonomy" id="559292"/>
    <lineage>
        <taxon>Eukaryota</taxon>
        <taxon>Fungi</taxon>
        <taxon>Dikarya</taxon>
        <taxon>Ascomycota</taxon>
        <taxon>Saccharomycotina</taxon>
        <taxon>Saccharomycetes</taxon>
        <taxon>Saccharomycetales</taxon>
        <taxon>Saccharomycetaceae</taxon>
        <taxon>Saccharomyces</taxon>
    </lineage>
</organism>
<proteinExistence type="evidence at protein level"/>
<feature type="chain" id="PRO_0000074525" description="Epsin-2">
    <location>
        <begin position="1"/>
        <end position="613"/>
    </location>
</feature>
<feature type="domain" description="ENTH" evidence="2">
    <location>
        <begin position="11"/>
        <end position="143"/>
    </location>
</feature>
<feature type="domain" description="UIM 1" evidence="1">
    <location>
        <begin position="175"/>
        <end position="194"/>
    </location>
</feature>
<feature type="domain" description="UIM 2" evidence="1">
    <location>
        <begin position="206"/>
        <end position="225"/>
    </location>
</feature>
<feature type="region of interest" description="Disordered" evidence="3">
    <location>
        <begin position="140"/>
        <end position="208"/>
    </location>
</feature>
<feature type="region of interest" description="Disordered" evidence="3">
    <location>
        <begin position="323"/>
        <end position="351"/>
    </location>
</feature>
<feature type="region of interest" description="Disordered" evidence="3">
    <location>
        <begin position="356"/>
        <end position="375"/>
    </location>
</feature>
<feature type="region of interest" description="Disordered" evidence="3">
    <location>
        <begin position="471"/>
        <end position="613"/>
    </location>
</feature>
<feature type="compositionally biased region" description="Basic residues" evidence="3">
    <location>
        <begin position="148"/>
        <end position="167"/>
    </location>
</feature>
<feature type="compositionally biased region" description="Basic and acidic residues" evidence="3">
    <location>
        <begin position="179"/>
        <end position="188"/>
    </location>
</feature>
<feature type="compositionally biased region" description="Low complexity" evidence="3">
    <location>
        <begin position="323"/>
        <end position="339"/>
    </location>
</feature>
<feature type="compositionally biased region" description="Polar residues" evidence="3">
    <location>
        <begin position="340"/>
        <end position="350"/>
    </location>
</feature>
<feature type="compositionally biased region" description="Polar residues" evidence="3">
    <location>
        <begin position="471"/>
        <end position="512"/>
    </location>
</feature>
<feature type="compositionally biased region" description="Low complexity" evidence="3">
    <location>
        <begin position="526"/>
        <end position="600"/>
    </location>
</feature>
<feature type="modified residue" description="Phosphothreonine" evidence="9 11">
    <location>
        <position position="165"/>
    </location>
</feature>
<feature type="modified residue" description="Phosphoserine" evidence="9 10 11">
    <location>
        <position position="167"/>
    </location>
</feature>
<feature type="modified residue" description="Phosphothreonine" evidence="8">
    <location>
        <position position="430"/>
    </location>
</feature>
<feature type="modified residue" description="Phosphoserine" evidence="8">
    <location>
        <position position="434"/>
    </location>
</feature>
<feature type="modified residue" description="Phosphothreonine" evidence="10">
    <location>
        <position position="450"/>
    </location>
</feature>
<feature type="modified residue" description="Phosphothreonine" evidence="9 11">
    <location>
        <position position="468"/>
    </location>
</feature>
<feature type="modified residue" description="Phosphothreonine" evidence="11">
    <location>
        <position position="470"/>
    </location>
</feature>
<feature type="cross-link" description="Glycyl lysine isopeptide (Lys-Gly) (interchain with G-Cter in ubiquitin)" evidence="12">
    <location>
        <position position="426"/>
    </location>
</feature>
<feature type="helix" evidence="14">
    <location>
        <begin position="7"/>
        <end position="10"/>
    </location>
</feature>
<feature type="turn" evidence="14">
    <location>
        <begin position="11"/>
        <end position="15"/>
    </location>
</feature>
<feature type="helix" evidence="13">
    <location>
        <begin position="18"/>
        <end position="26"/>
    </location>
</feature>
<feature type="strand" evidence="13">
    <location>
        <begin position="29"/>
        <end position="31"/>
    </location>
</feature>
<feature type="helix" evidence="13">
    <location>
        <begin position="36"/>
        <end position="45"/>
    </location>
</feature>
<feature type="helix" evidence="13">
    <location>
        <begin position="49"/>
        <end position="63"/>
    </location>
</feature>
<feature type="helix" evidence="13">
    <location>
        <begin position="67"/>
        <end position="69"/>
    </location>
</feature>
<feature type="helix" evidence="13">
    <location>
        <begin position="70"/>
        <end position="86"/>
    </location>
</feature>
<feature type="helix" evidence="13">
    <location>
        <begin position="89"/>
        <end position="97"/>
    </location>
</feature>
<feature type="helix" evidence="13">
    <location>
        <begin position="99"/>
        <end position="104"/>
    </location>
</feature>
<feature type="helix" evidence="13">
    <location>
        <begin position="105"/>
        <end position="107"/>
    </location>
</feature>
<feature type="strand" evidence="15">
    <location>
        <begin position="117"/>
        <end position="119"/>
    </location>
</feature>
<feature type="helix" evidence="13">
    <location>
        <begin position="120"/>
        <end position="133"/>
    </location>
</feature>
<feature type="helix" evidence="13">
    <location>
        <begin position="136"/>
        <end position="145"/>
    </location>
</feature>
<dbReference type="EMBL" id="U14913">
    <property type="protein sequence ID" value="AAB67428.1"/>
    <property type="molecule type" value="Genomic_DNA"/>
</dbReference>
<dbReference type="EMBL" id="BK006945">
    <property type="protein sequence ID" value="DAA09523.1"/>
    <property type="molecule type" value="Genomic_DNA"/>
</dbReference>
<dbReference type="PIR" id="S48557">
    <property type="entry name" value="S48557"/>
</dbReference>
<dbReference type="RefSeq" id="NP_013307.1">
    <property type="nucleotide sequence ID" value="NM_001182093.1"/>
</dbReference>
<dbReference type="PDB" id="4GZC">
    <property type="method" value="X-ray"/>
    <property type="resolution" value="1.30 A"/>
    <property type="chains" value="A=1-149"/>
</dbReference>
<dbReference type="PDB" id="4GZD">
    <property type="method" value="X-ray"/>
    <property type="resolution" value="1.75 A"/>
    <property type="chains" value="A=1-149"/>
</dbReference>
<dbReference type="PDB" id="5ON7">
    <property type="method" value="X-ray"/>
    <property type="resolution" value="3.35 A"/>
    <property type="chains" value="A/B=1-156"/>
</dbReference>
<dbReference type="PDB" id="6ENR">
    <property type="method" value="X-ray"/>
    <property type="resolution" value="1.84 A"/>
    <property type="chains" value="A=1-156"/>
</dbReference>
<dbReference type="PDB" id="9EXG">
    <property type="method" value="X-ray"/>
    <property type="resolution" value="1.74 A"/>
    <property type="chains" value="D/E/F/G/H/I/J/L/M=607-613"/>
</dbReference>
<dbReference type="PDBsum" id="4GZC"/>
<dbReference type="PDBsum" id="4GZD"/>
<dbReference type="PDBsum" id="5ON7"/>
<dbReference type="PDBsum" id="6ENR"/>
<dbReference type="PDBsum" id="9EXG"/>
<dbReference type="SMR" id="Q05785"/>
<dbReference type="BioGRID" id="31474">
    <property type="interactions" value="207"/>
</dbReference>
<dbReference type="DIP" id="DIP-2698N"/>
<dbReference type="ELM" id="Q05785"/>
<dbReference type="FunCoup" id="Q05785">
    <property type="interactions" value="157"/>
</dbReference>
<dbReference type="IntAct" id="Q05785">
    <property type="interactions" value="36"/>
</dbReference>
<dbReference type="MINT" id="Q05785"/>
<dbReference type="STRING" id="4932.YLR206W"/>
<dbReference type="iPTMnet" id="Q05785"/>
<dbReference type="PaxDb" id="4932-YLR206W"/>
<dbReference type="PeptideAtlas" id="Q05785"/>
<dbReference type="EnsemblFungi" id="YLR206W_mRNA">
    <property type="protein sequence ID" value="YLR206W"/>
    <property type="gene ID" value="YLR206W"/>
</dbReference>
<dbReference type="GeneID" id="850903"/>
<dbReference type="KEGG" id="sce:YLR206W"/>
<dbReference type="AGR" id="SGD:S000004196"/>
<dbReference type="SGD" id="S000004196">
    <property type="gene designation" value="ENT2"/>
</dbReference>
<dbReference type="VEuPathDB" id="FungiDB:YLR206W"/>
<dbReference type="eggNOG" id="KOG2056">
    <property type="taxonomic scope" value="Eukaryota"/>
</dbReference>
<dbReference type="GeneTree" id="ENSGT00940000173221"/>
<dbReference type="HOGENOM" id="CLU_012678_0_1_1"/>
<dbReference type="InParanoid" id="Q05785"/>
<dbReference type="OMA" id="STEFYDI"/>
<dbReference type="OrthoDB" id="4033880at2759"/>
<dbReference type="BioCyc" id="YEAST:G3O-32324-MONOMER"/>
<dbReference type="Reactome" id="R-SCE-8856825">
    <property type="pathway name" value="Cargo recognition for clathrin-mediated endocytosis"/>
</dbReference>
<dbReference type="BioGRID-ORCS" id="850903">
    <property type="hits" value="1 hit in 10 CRISPR screens"/>
</dbReference>
<dbReference type="CD-CODE" id="18F6A7CA">
    <property type="entry name" value="Endocytic condensates"/>
</dbReference>
<dbReference type="EvolutionaryTrace" id="Q05785"/>
<dbReference type="PRO" id="PR:Q05785"/>
<dbReference type="Proteomes" id="UP000002311">
    <property type="component" value="Chromosome XII"/>
</dbReference>
<dbReference type="RNAct" id="Q05785">
    <property type="molecule type" value="protein"/>
</dbReference>
<dbReference type="GO" id="GO:0030125">
    <property type="term" value="C:clathrin vesicle coat"/>
    <property type="evidence" value="ECO:0000318"/>
    <property type="project" value="GO_Central"/>
</dbReference>
<dbReference type="GO" id="GO:0005768">
    <property type="term" value="C:endosome"/>
    <property type="evidence" value="ECO:0000318"/>
    <property type="project" value="GO_Central"/>
</dbReference>
<dbReference type="GO" id="GO:0043332">
    <property type="term" value="C:mating projection tip"/>
    <property type="evidence" value="ECO:0007005"/>
    <property type="project" value="SGD"/>
</dbReference>
<dbReference type="GO" id="GO:0005886">
    <property type="term" value="C:plasma membrane"/>
    <property type="evidence" value="ECO:0000318"/>
    <property type="project" value="GO_Central"/>
</dbReference>
<dbReference type="GO" id="GO:0030276">
    <property type="term" value="F:clathrin binding"/>
    <property type="evidence" value="ECO:0000250"/>
    <property type="project" value="SGD"/>
</dbReference>
<dbReference type="GO" id="GO:0036435">
    <property type="term" value="F:K48-linked polyubiquitin modification-dependent protein binding"/>
    <property type="evidence" value="ECO:0000314"/>
    <property type="project" value="SGD"/>
</dbReference>
<dbReference type="GO" id="GO:0070530">
    <property type="term" value="F:K63-linked polyubiquitin modification-dependent protein binding"/>
    <property type="evidence" value="ECO:0000314"/>
    <property type="project" value="SGD"/>
</dbReference>
<dbReference type="GO" id="GO:0005543">
    <property type="term" value="F:phospholipid binding"/>
    <property type="evidence" value="ECO:0000318"/>
    <property type="project" value="GO_Central"/>
</dbReference>
<dbReference type="GO" id="GO:0000147">
    <property type="term" value="P:actin cortical patch assembly"/>
    <property type="evidence" value="ECO:0000315"/>
    <property type="project" value="SGD"/>
</dbReference>
<dbReference type="GO" id="GO:0007015">
    <property type="term" value="P:actin filament organization"/>
    <property type="evidence" value="ECO:0000315"/>
    <property type="project" value="SGD"/>
</dbReference>
<dbReference type="GO" id="GO:0006897">
    <property type="term" value="P:endocytosis"/>
    <property type="evidence" value="ECO:0000315"/>
    <property type="project" value="SGD"/>
</dbReference>
<dbReference type="CDD" id="cd16991">
    <property type="entry name" value="ENTH_Ent1_Ent2"/>
    <property type="match status" value="1"/>
</dbReference>
<dbReference type="FunFam" id="1.25.40.90:FF:000010">
    <property type="entry name" value="EH domain binding protein"/>
    <property type="match status" value="1"/>
</dbReference>
<dbReference type="Gene3D" id="1.25.40.90">
    <property type="match status" value="1"/>
</dbReference>
<dbReference type="InterPro" id="IPR013809">
    <property type="entry name" value="ENTH"/>
</dbReference>
<dbReference type="InterPro" id="IPR008942">
    <property type="entry name" value="ENTH_VHS"/>
</dbReference>
<dbReference type="InterPro" id="IPR003903">
    <property type="entry name" value="UIM_dom"/>
</dbReference>
<dbReference type="PANTHER" id="PTHR12276:SF110">
    <property type="entry name" value="EPSIN-1-RELATED"/>
    <property type="match status" value="1"/>
</dbReference>
<dbReference type="PANTHER" id="PTHR12276">
    <property type="entry name" value="EPSIN/ENT-RELATED"/>
    <property type="match status" value="1"/>
</dbReference>
<dbReference type="Pfam" id="PF01417">
    <property type="entry name" value="ENTH"/>
    <property type="match status" value="1"/>
</dbReference>
<dbReference type="SMART" id="SM00273">
    <property type="entry name" value="ENTH"/>
    <property type="match status" value="1"/>
</dbReference>
<dbReference type="SMART" id="SM00726">
    <property type="entry name" value="UIM"/>
    <property type="match status" value="2"/>
</dbReference>
<dbReference type="SUPFAM" id="SSF48464">
    <property type="entry name" value="ENTH/VHS domain"/>
    <property type="match status" value="1"/>
</dbReference>
<dbReference type="PROSITE" id="PS50942">
    <property type="entry name" value="ENTH"/>
    <property type="match status" value="1"/>
</dbReference>
<dbReference type="PROSITE" id="PS50330">
    <property type="entry name" value="UIM"/>
    <property type="match status" value="2"/>
</dbReference>
<protein>
    <recommendedName>
        <fullName>Epsin-2</fullName>
    </recommendedName>
</protein>
<comment type="function">
    <text evidence="4">Binds to membranes enriched in phosphatidylinositol 3,5-bisphosphate (PtdIns(3,5)P2) and phosphatidylinositol 4,5-bisphosphate (PtdIns(4,5)P2). Required for endocytosis and localization of actin.</text>
</comment>
<comment type="interaction">
    <interactant intactId="EBI-35928">
        <id>Q05785</id>
    </interactant>
    <interactant intactId="EBI-15044">
        <id>P39083</id>
        <label>RGA1</label>
    </interactant>
    <organismsDiffer>false</organismsDiffer>
    <experiments>2</experiments>
</comment>
<comment type="interaction">
    <interactant intactId="EBI-35928">
        <id>Q05785</id>
    </interactant>
    <interactant intactId="EBI-15060">
        <id>Q06407</id>
        <label>RGA2</label>
    </interactant>
    <organismsDiffer>false</organismsDiffer>
    <experiments>2</experiments>
</comment>
<comment type="subcellular location">
    <subcellularLocation>
        <location>Cytoplasm</location>
    </subcellularLocation>
    <subcellularLocation>
        <location>Membrane</location>
        <topology>Peripheral membrane protein</topology>
    </subcellularLocation>
    <text>Localizes in a punctate pattern. Found in the actin cortical patches, although the majority is located at the cell periphery.</text>
</comment>
<comment type="PTM">
    <text evidence="5">Phosphorylated by PRK1.</text>
</comment>
<comment type="miscellaneous">
    <text evidence="6">Present with 1970 molecules/cell in log phase SD medium.</text>
</comment>
<comment type="similarity">
    <text evidence="7">Belongs to the epsin family.</text>
</comment>
<evidence type="ECO:0000255" key="1">
    <source>
        <dbReference type="PROSITE-ProRule" id="PRU00213"/>
    </source>
</evidence>
<evidence type="ECO:0000255" key="2">
    <source>
        <dbReference type="PROSITE-ProRule" id="PRU00243"/>
    </source>
</evidence>
<evidence type="ECO:0000256" key="3">
    <source>
        <dbReference type="SAM" id="MobiDB-lite"/>
    </source>
</evidence>
<evidence type="ECO:0000269" key="4">
    <source>
    </source>
</evidence>
<evidence type="ECO:0000269" key="5">
    <source>
    </source>
</evidence>
<evidence type="ECO:0000269" key="6">
    <source>
    </source>
</evidence>
<evidence type="ECO:0000305" key="7"/>
<evidence type="ECO:0007744" key="8">
    <source>
    </source>
</evidence>
<evidence type="ECO:0007744" key="9">
    <source>
    </source>
</evidence>
<evidence type="ECO:0007744" key="10">
    <source>
    </source>
</evidence>
<evidence type="ECO:0007744" key="11">
    <source>
    </source>
</evidence>
<evidence type="ECO:0007744" key="12">
    <source>
    </source>
</evidence>
<evidence type="ECO:0007829" key="13">
    <source>
        <dbReference type="PDB" id="4GZC"/>
    </source>
</evidence>
<evidence type="ECO:0007829" key="14">
    <source>
        <dbReference type="PDB" id="5ON7"/>
    </source>
</evidence>
<evidence type="ECO:0007829" key="15">
    <source>
        <dbReference type="PDB" id="6ENR"/>
    </source>
</evidence>
<sequence length="613" mass="71807">MSKQFVRSAKNMMKGYSSTQVLVRDATANDSRTPSIDTLDDLAQRSYDSVDFFEIMDMLDKRLNDKGKYWRHVAKSLTVLDYLVRFGSENCVLWCRENFYVIKTLREFRHENESGFDEGQIIRVKAKELVSLLNDEERLREERSMNTRNRRANRAARPRPRRQRTRSNPHDSSPSYQDDLEKALEESRITAQEDEQRRRELAQYDDEDPDFQAALQLSKEEEELKQLQELQRLQKQQQSLSQFQAPLQQQQPQQQPAYYDIFGNPISQDEYLQYQYQQDQEQAMAQQRWLDQQQEQQQLAEQQYFQQQQQAAAAASALQQQQTAANMQQQQQQPADFQQPLPTGSNNPFSMDNLERQKQEQQHAQLQRQQEEARQQQEQLKLQQLQRQQQEEAQLHQKRQEEAQLQQQQAQLLQQQAQFQQQQPLKQTRTGNQSISDKYSDLNTLLATGTGIDTFGNTGEARIPAQHTKTGTFINSQGTGYKQVTNEPKNNPFLSNQYTGLPSTNIVPTQTGYGFGNQPQSPPTNSPQQNPTGISYSQPQQQQQPQQQPQYMQNFQQQQPQYAQNFQQQPQYTQNYQQQPQYIQPHQQQQQQQQQQQQQQGYTPDQGVSLIDL</sequence>
<keyword id="KW-0002">3D-structure</keyword>
<keyword id="KW-0963">Cytoplasm</keyword>
<keyword id="KW-0254">Endocytosis</keyword>
<keyword id="KW-1017">Isopeptide bond</keyword>
<keyword id="KW-0446">Lipid-binding</keyword>
<keyword id="KW-0472">Membrane</keyword>
<keyword id="KW-0597">Phosphoprotein</keyword>
<keyword id="KW-1185">Reference proteome</keyword>
<keyword id="KW-0677">Repeat</keyword>
<keyword id="KW-0832">Ubl conjugation</keyword>
<accession>Q05785</accession>
<accession>D6VYK7</accession>
<reference key="1">
    <citation type="journal article" date="1997" name="Nature">
        <title>The nucleotide sequence of Saccharomyces cerevisiae chromosome XII.</title>
        <authorList>
            <person name="Johnston M."/>
            <person name="Hillier L.W."/>
            <person name="Riles L."/>
            <person name="Albermann K."/>
            <person name="Andre B."/>
            <person name="Ansorge W."/>
            <person name="Benes V."/>
            <person name="Brueckner M."/>
            <person name="Delius H."/>
            <person name="Dubois E."/>
            <person name="Duesterhoeft A."/>
            <person name="Entian K.-D."/>
            <person name="Floeth M."/>
            <person name="Goffeau A."/>
            <person name="Hebling U."/>
            <person name="Heumann K."/>
            <person name="Heuss-Neitzel D."/>
            <person name="Hilbert H."/>
            <person name="Hilger F."/>
            <person name="Kleine K."/>
            <person name="Koetter P."/>
            <person name="Louis E.J."/>
            <person name="Messenguy F."/>
            <person name="Mewes H.-W."/>
            <person name="Miosga T."/>
            <person name="Moestl D."/>
            <person name="Mueller-Auer S."/>
            <person name="Nentwich U."/>
            <person name="Obermaier B."/>
            <person name="Piravandi E."/>
            <person name="Pohl T.M."/>
            <person name="Portetelle D."/>
            <person name="Purnelle B."/>
            <person name="Rechmann S."/>
            <person name="Rieger M."/>
            <person name="Rinke M."/>
            <person name="Rose M."/>
            <person name="Scharfe M."/>
            <person name="Scherens B."/>
            <person name="Scholler P."/>
            <person name="Schwager C."/>
            <person name="Schwarz S."/>
            <person name="Underwood A.P."/>
            <person name="Urrestarazu L.A."/>
            <person name="Vandenbol M."/>
            <person name="Verhasselt P."/>
            <person name="Vierendeels F."/>
            <person name="Voet M."/>
            <person name="Volckaert G."/>
            <person name="Voss H."/>
            <person name="Wambutt R."/>
            <person name="Wedler E."/>
            <person name="Wedler H."/>
            <person name="Zimmermann F.K."/>
            <person name="Zollner A."/>
            <person name="Hani J."/>
            <person name="Hoheisel J.D."/>
        </authorList>
    </citation>
    <scope>NUCLEOTIDE SEQUENCE [LARGE SCALE GENOMIC DNA]</scope>
    <source>
        <strain>ATCC 204508 / S288c</strain>
    </source>
</reference>
<reference key="2">
    <citation type="journal article" date="2014" name="G3 (Bethesda)">
        <title>The reference genome sequence of Saccharomyces cerevisiae: Then and now.</title>
        <authorList>
            <person name="Engel S.R."/>
            <person name="Dietrich F.S."/>
            <person name="Fisk D.G."/>
            <person name="Binkley G."/>
            <person name="Balakrishnan R."/>
            <person name="Costanzo M.C."/>
            <person name="Dwight S.S."/>
            <person name="Hitz B.C."/>
            <person name="Karra K."/>
            <person name="Nash R.S."/>
            <person name="Weng S."/>
            <person name="Wong E.D."/>
            <person name="Lloyd P."/>
            <person name="Skrzypek M.S."/>
            <person name="Miyasato S.R."/>
            <person name="Simison M."/>
            <person name="Cherry J.M."/>
        </authorList>
    </citation>
    <scope>GENOME REANNOTATION</scope>
    <source>
        <strain>ATCC 204508 / S288c</strain>
    </source>
</reference>
<reference key="3">
    <citation type="journal article" date="1999" name="EMBO J.">
        <title>Yeast epsins contain an essential N-terminal ENTH domain, bind clathrin and are required for endocytosis.</title>
        <authorList>
            <person name="Wendland B."/>
            <person name="Steece K.E."/>
            <person name="Emr S.D."/>
        </authorList>
    </citation>
    <scope>FUNCTION</scope>
    <scope>SUBCELLULAR LOCATION</scope>
</reference>
<reference key="4">
    <citation type="journal article" date="2001" name="Mol. Biol. Cell">
        <title>In vivo role for actin-regulating kinases in endocytosis and yeast epsin phosphorylation.</title>
        <authorList>
            <person name="Watson H.A."/>
            <person name="Cope M.J.T.V."/>
            <person name="Groen A.C."/>
            <person name="Drubin D.G."/>
            <person name="Wendland B."/>
        </authorList>
    </citation>
    <scope>SUBCELLULAR LOCATION</scope>
    <scope>PHOSPHORYLATION</scope>
</reference>
<reference key="5">
    <citation type="journal article" date="2003" name="Nature">
        <title>Global analysis of protein expression in yeast.</title>
        <authorList>
            <person name="Ghaemmaghami S."/>
            <person name="Huh W.-K."/>
            <person name="Bower K."/>
            <person name="Howson R.W."/>
            <person name="Belle A."/>
            <person name="Dephoure N."/>
            <person name="O'Shea E.K."/>
            <person name="Weissman J.S."/>
        </authorList>
    </citation>
    <scope>LEVEL OF PROTEIN EXPRESSION [LARGE SCALE ANALYSIS]</scope>
</reference>
<reference key="6">
    <citation type="journal article" date="2007" name="J. Proteome Res.">
        <title>Large-scale phosphorylation analysis of alpha-factor-arrested Saccharomyces cerevisiae.</title>
        <authorList>
            <person name="Li X."/>
            <person name="Gerber S.A."/>
            <person name="Rudner A.D."/>
            <person name="Beausoleil S.A."/>
            <person name="Haas W."/>
            <person name="Villen J."/>
            <person name="Elias J.E."/>
            <person name="Gygi S.P."/>
        </authorList>
    </citation>
    <scope>PHOSPHORYLATION [LARGE SCALE ANALYSIS] AT THR-165; SER-167 AND THR-468</scope>
    <scope>IDENTIFICATION BY MASS SPECTROMETRY [LARGE SCALE ANALYSIS]</scope>
    <source>
        <strain>ADR376</strain>
    </source>
</reference>
<reference key="7">
    <citation type="journal article" date="2007" name="Proc. Natl. Acad. Sci. U.S.A.">
        <title>Analysis of phosphorylation sites on proteins from Saccharomyces cerevisiae by electron transfer dissociation (ETD) mass spectrometry.</title>
        <authorList>
            <person name="Chi A."/>
            <person name="Huttenhower C."/>
            <person name="Geer L.Y."/>
            <person name="Coon J.J."/>
            <person name="Syka J.E.P."/>
            <person name="Bai D.L."/>
            <person name="Shabanowitz J."/>
            <person name="Burke D.J."/>
            <person name="Troyanskaya O.G."/>
            <person name="Hunt D.F."/>
        </authorList>
    </citation>
    <scope>PHOSPHORYLATION [LARGE SCALE ANALYSIS] AT THR-430 AND SER-434</scope>
    <scope>IDENTIFICATION BY MASS SPECTROMETRY [LARGE SCALE ANALYSIS]</scope>
</reference>
<reference key="8">
    <citation type="journal article" date="2008" name="Mol. Cell. Proteomics">
        <title>A multidimensional chromatography technology for in-depth phosphoproteome analysis.</title>
        <authorList>
            <person name="Albuquerque C.P."/>
            <person name="Smolka M.B."/>
            <person name="Payne S.H."/>
            <person name="Bafna V."/>
            <person name="Eng J."/>
            <person name="Zhou H."/>
        </authorList>
    </citation>
    <scope>PHOSPHORYLATION [LARGE SCALE ANALYSIS] AT SER-167 AND THR-450</scope>
    <scope>IDENTIFICATION BY MASS SPECTROMETRY [LARGE SCALE ANALYSIS]</scope>
</reference>
<reference key="9">
    <citation type="journal article" date="2009" name="Science">
        <title>Global analysis of Cdk1 substrate phosphorylation sites provides insights into evolution.</title>
        <authorList>
            <person name="Holt L.J."/>
            <person name="Tuch B.B."/>
            <person name="Villen J."/>
            <person name="Johnson A.D."/>
            <person name="Gygi S.P."/>
            <person name="Morgan D.O."/>
        </authorList>
    </citation>
    <scope>PHOSPHORYLATION [LARGE SCALE ANALYSIS] AT THR-165; SER-167; THR-468 AND THR-470</scope>
    <scope>IDENTIFICATION BY MASS SPECTROMETRY [LARGE SCALE ANALYSIS]</scope>
</reference>
<reference key="10">
    <citation type="journal article" date="2012" name="Proteomics">
        <title>Sites of ubiquitin attachment in Saccharomyces cerevisiae.</title>
        <authorList>
            <person name="Starita L.M."/>
            <person name="Lo R.S."/>
            <person name="Eng J.K."/>
            <person name="von Haller P.D."/>
            <person name="Fields S."/>
        </authorList>
    </citation>
    <scope>UBIQUITINATION [LARGE SCALE ANALYSIS] AT LYS-426</scope>
    <scope>IDENTIFICATION BY MASS SPECTROMETRY [LARGE SCALE ANALYSIS]</scope>
</reference>